<dbReference type="EC" id="3.1.1.96" evidence="1"/>
<dbReference type="EMBL" id="CP000608">
    <property type="protein sequence ID" value="ABO47612.1"/>
    <property type="molecule type" value="Genomic_DNA"/>
</dbReference>
<dbReference type="RefSeq" id="WP_003017627.1">
    <property type="nucleotide sequence ID" value="NC_009257.1"/>
</dbReference>
<dbReference type="SMR" id="A4J0B0"/>
<dbReference type="KEGG" id="ftw:FTW_1975"/>
<dbReference type="HOGENOM" id="CLU_076901_1_0_6"/>
<dbReference type="GO" id="GO:0005737">
    <property type="term" value="C:cytoplasm"/>
    <property type="evidence" value="ECO:0007669"/>
    <property type="project" value="UniProtKB-SubCell"/>
</dbReference>
<dbReference type="GO" id="GO:0051500">
    <property type="term" value="F:D-tyrosyl-tRNA(Tyr) deacylase activity"/>
    <property type="evidence" value="ECO:0007669"/>
    <property type="project" value="TreeGrafter"/>
</dbReference>
<dbReference type="GO" id="GO:0106026">
    <property type="term" value="F:Gly-tRNA(Ala) deacylase activity"/>
    <property type="evidence" value="ECO:0007669"/>
    <property type="project" value="UniProtKB-UniRule"/>
</dbReference>
<dbReference type="GO" id="GO:0043908">
    <property type="term" value="F:Ser(Gly)-tRNA(Ala) hydrolase activity"/>
    <property type="evidence" value="ECO:0007669"/>
    <property type="project" value="UniProtKB-UniRule"/>
</dbReference>
<dbReference type="GO" id="GO:0000049">
    <property type="term" value="F:tRNA binding"/>
    <property type="evidence" value="ECO:0007669"/>
    <property type="project" value="UniProtKB-UniRule"/>
</dbReference>
<dbReference type="GO" id="GO:0019478">
    <property type="term" value="P:D-amino acid catabolic process"/>
    <property type="evidence" value="ECO:0007669"/>
    <property type="project" value="UniProtKB-UniRule"/>
</dbReference>
<dbReference type="FunFam" id="3.50.80.10:FF:000001">
    <property type="entry name" value="D-aminoacyl-tRNA deacylase"/>
    <property type="match status" value="1"/>
</dbReference>
<dbReference type="Gene3D" id="3.50.80.10">
    <property type="entry name" value="D-tyrosyl-tRNA(Tyr) deacylase"/>
    <property type="match status" value="1"/>
</dbReference>
<dbReference type="HAMAP" id="MF_00518">
    <property type="entry name" value="Deacylase_Dtd"/>
    <property type="match status" value="1"/>
</dbReference>
<dbReference type="InterPro" id="IPR003732">
    <property type="entry name" value="Daa-tRNA_deacyls_DTD"/>
</dbReference>
<dbReference type="InterPro" id="IPR023509">
    <property type="entry name" value="DTD-like_sf"/>
</dbReference>
<dbReference type="NCBIfam" id="TIGR00256">
    <property type="entry name" value="D-aminoacyl-tRNA deacylase"/>
    <property type="match status" value="1"/>
</dbReference>
<dbReference type="PANTHER" id="PTHR10472:SF5">
    <property type="entry name" value="D-AMINOACYL-TRNA DEACYLASE 1"/>
    <property type="match status" value="1"/>
</dbReference>
<dbReference type="PANTHER" id="PTHR10472">
    <property type="entry name" value="D-TYROSYL-TRNA TYR DEACYLASE"/>
    <property type="match status" value="1"/>
</dbReference>
<dbReference type="Pfam" id="PF02580">
    <property type="entry name" value="Tyr_Deacylase"/>
    <property type="match status" value="1"/>
</dbReference>
<dbReference type="SUPFAM" id="SSF69500">
    <property type="entry name" value="DTD-like"/>
    <property type="match status" value="1"/>
</dbReference>
<organism>
    <name type="scientific">Francisella tularensis subsp. tularensis (strain WY96-3418)</name>
    <dbReference type="NCBI Taxonomy" id="418136"/>
    <lineage>
        <taxon>Bacteria</taxon>
        <taxon>Pseudomonadati</taxon>
        <taxon>Pseudomonadota</taxon>
        <taxon>Gammaproteobacteria</taxon>
        <taxon>Thiotrichales</taxon>
        <taxon>Francisellaceae</taxon>
        <taxon>Francisella</taxon>
    </lineage>
</organism>
<sequence length="145" mass="16325">MLSIIQRVNCAKVVVDNQKVADINKGILALVCVEKEDTQQNFEKMADKIIKYRIFEDDAGKMNLSLVDIDAEIILVPQFTLAADTKKGNRPSFSSGCPPEIAKEKFKEFENIFRRKYNKVQTGIFGADMKVSLTNDGPVTFSFKI</sequence>
<keyword id="KW-0963">Cytoplasm</keyword>
<keyword id="KW-0378">Hydrolase</keyword>
<keyword id="KW-0694">RNA-binding</keyword>
<keyword id="KW-0820">tRNA-binding</keyword>
<evidence type="ECO:0000255" key="1">
    <source>
        <dbReference type="HAMAP-Rule" id="MF_00518"/>
    </source>
</evidence>
<comment type="function">
    <text evidence="1">An aminoacyl-tRNA editing enzyme that deacylates mischarged D-aminoacyl-tRNAs. Also deacylates mischarged glycyl-tRNA(Ala), protecting cells against glycine mischarging by AlaRS. Acts via tRNA-based rather than protein-based catalysis; rejects L-amino acids rather than detecting D-amino acids in the active site. By recycling D-aminoacyl-tRNA to D-amino acids and free tRNA molecules, this enzyme counteracts the toxicity associated with the formation of D-aminoacyl-tRNA entities in vivo and helps enforce protein L-homochirality.</text>
</comment>
<comment type="catalytic activity">
    <reaction evidence="1">
        <text>glycyl-tRNA(Ala) + H2O = tRNA(Ala) + glycine + H(+)</text>
        <dbReference type="Rhea" id="RHEA:53744"/>
        <dbReference type="Rhea" id="RHEA-COMP:9657"/>
        <dbReference type="Rhea" id="RHEA-COMP:13640"/>
        <dbReference type="ChEBI" id="CHEBI:15377"/>
        <dbReference type="ChEBI" id="CHEBI:15378"/>
        <dbReference type="ChEBI" id="CHEBI:57305"/>
        <dbReference type="ChEBI" id="CHEBI:78442"/>
        <dbReference type="ChEBI" id="CHEBI:78522"/>
        <dbReference type="EC" id="3.1.1.96"/>
    </reaction>
</comment>
<comment type="catalytic activity">
    <reaction evidence="1">
        <text>a D-aminoacyl-tRNA + H2O = a tRNA + a D-alpha-amino acid + H(+)</text>
        <dbReference type="Rhea" id="RHEA:13953"/>
        <dbReference type="Rhea" id="RHEA-COMP:10123"/>
        <dbReference type="Rhea" id="RHEA-COMP:10124"/>
        <dbReference type="ChEBI" id="CHEBI:15377"/>
        <dbReference type="ChEBI" id="CHEBI:15378"/>
        <dbReference type="ChEBI" id="CHEBI:59871"/>
        <dbReference type="ChEBI" id="CHEBI:78442"/>
        <dbReference type="ChEBI" id="CHEBI:79333"/>
        <dbReference type="EC" id="3.1.1.96"/>
    </reaction>
</comment>
<comment type="subunit">
    <text evidence="1">Homodimer.</text>
</comment>
<comment type="subcellular location">
    <subcellularLocation>
        <location evidence="1">Cytoplasm</location>
    </subcellularLocation>
</comment>
<comment type="domain">
    <text evidence="1">A Gly-cisPro motif from one monomer fits into the active site of the other monomer to allow specific chiral rejection of L-amino acids.</text>
</comment>
<comment type="similarity">
    <text evidence="1">Belongs to the DTD family.</text>
</comment>
<feature type="chain" id="PRO_1000127538" description="D-aminoacyl-tRNA deacylase">
    <location>
        <begin position="1"/>
        <end position="145"/>
    </location>
</feature>
<feature type="short sequence motif" description="Gly-cisPro motif, important for rejection of L-amino acids" evidence="1">
    <location>
        <begin position="137"/>
        <end position="138"/>
    </location>
</feature>
<accession>A4J0B0</accession>
<proteinExistence type="inferred from homology"/>
<protein>
    <recommendedName>
        <fullName evidence="1">D-aminoacyl-tRNA deacylase</fullName>
        <shortName evidence="1">DTD</shortName>
        <ecNumber evidence="1">3.1.1.96</ecNumber>
    </recommendedName>
    <alternativeName>
        <fullName evidence="1">Gly-tRNA(Ala) deacylase</fullName>
    </alternativeName>
</protein>
<name>DTD_FRATW</name>
<gene>
    <name evidence="1" type="primary">dtd</name>
    <name type="ordered locus">FTW_1975</name>
</gene>
<reference key="1">
    <citation type="journal article" date="2007" name="PLoS ONE">
        <title>Complete genomic characterization of a pathogenic A.II strain of Francisella tularensis subspecies tularensis.</title>
        <authorList>
            <person name="Beckstrom-Sternberg S.M."/>
            <person name="Auerbach R.K."/>
            <person name="Godbole S."/>
            <person name="Pearson J.V."/>
            <person name="Beckstrom-Sternberg J.S."/>
            <person name="Deng Z."/>
            <person name="Munk C."/>
            <person name="Kubota K."/>
            <person name="Zhou Y."/>
            <person name="Bruce D."/>
            <person name="Noronha J."/>
            <person name="Scheuermann R.H."/>
            <person name="Wang A."/>
            <person name="Wei X."/>
            <person name="Wang J."/>
            <person name="Hao J."/>
            <person name="Wagner D.M."/>
            <person name="Brettin T.S."/>
            <person name="Brown N."/>
            <person name="Gilna P."/>
            <person name="Keim P.S."/>
        </authorList>
    </citation>
    <scope>NUCLEOTIDE SEQUENCE [LARGE SCALE GENOMIC DNA]</scope>
    <source>
        <strain>WY96-3418</strain>
    </source>
</reference>